<evidence type="ECO:0000255" key="1">
    <source>
        <dbReference type="HAMAP-Rule" id="MF_00054"/>
    </source>
</evidence>
<sequence>MARDYPLERYRNFGIMAHIDAGKTTCSERILYYTGKSHNIGEVHDGAATMDWMEQEQERGITITSAATTTFWERTENGTEPDSEKHRLNIIDTPGHVDFTIEVERSLAVLDGAVCVLDANAGVEPQTETVWRQADRYKVPRMVFVNKMDKIGADFFNCVRMIEDRTGARAVPVGIPIGAETELEGLIDLVTMEEWLWQGEDLGASWIKAPIRDSLNDMALEWRAKMIEAAVEMDDDAMENYLMDGAEPDVPTLRALLRKGTLAMAFVPVLGGSAFKNKGVQPLLNAVIDYLPSPLDVVDYMGFKPGDETETRNIPRRADDDMAFSGLAFKIMNDPFVGSLTFVRIYSGQLRKGDNMINSTKQNNERVGRMMMMHSNNREEIDEAFAGDIIALGGLKNTTTGDTLCDKSDPVVLETMTFPEPVIEIAVEPKTKADQEKMAMALQRLSAEDPSFRVETDIESGQTIMRGMGELHLDILVDRMKREFKVEANIGAPQVAYRETIGHEVEHTYTHKKQSGGSGQYAEVKLLITPTEPGEGYSFESKIVGGAVPKEYIPGVEKGIKSVMDSGPLAGFPVIDFKVQLLDGKFHDVDSSVLAFEIAGRMGMREGMRKAGAKLLEPIMKVEVITPEDYTGGIIGDLTSRRGQVQGQDTRGNAIAIDAFVPLANMFGYINTLRSMSSGRAQFTMQFDHYEPVPQNISDEIQAKYA</sequence>
<organism>
    <name type="scientific">Jannaschia sp. (strain CCS1)</name>
    <dbReference type="NCBI Taxonomy" id="290400"/>
    <lineage>
        <taxon>Bacteria</taxon>
        <taxon>Pseudomonadati</taxon>
        <taxon>Pseudomonadota</taxon>
        <taxon>Alphaproteobacteria</taxon>
        <taxon>Rhodobacterales</taxon>
        <taxon>Roseobacteraceae</taxon>
        <taxon>Jannaschia</taxon>
    </lineage>
</organism>
<accession>Q28UW8</accession>
<comment type="function">
    <text evidence="1">Catalyzes the GTP-dependent ribosomal translocation step during translation elongation. During this step, the ribosome changes from the pre-translocational (PRE) to the post-translocational (POST) state as the newly formed A-site-bound peptidyl-tRNA and P-site-bound deacylated tRNA move to the P and E sites, respectively. Catalyzes the coordinated movement of the two tRNA molecules, the mRNA and conformational changes in the ribosome.</text>
</comment>
<comment type="subcellular location">
    <subcellularLocation>
        <location evidence="1">Cytoplasm</location>
    </subcellularLocation>
</comment>
<comment type="similarity">
    <text evidence="1">Belongs to the TRAFAC class translation factor GTPase superfamily. Classic translation factor GTPase family. EF-G/EF-2 subfamily.</text>
</comment>
<dbReference type="EMBL" id="CP000264">
    <property type="protein sequence ID" value="ABD53494.1"/>
    <property type="molecule type" value="Genomic_DNA"/>
</dbReference>
<dbReference type="RefSeq" id="WP_011453703.1">
    <property type="nucleotide sequence ID" value="NC_007802.1"/>
</dbReference>
<dbReference type="SMR" id="Q28UW8"/>
<dbReference type="STRING" id="290400.Jann_0577"/>
<dbReference type="KEGG" id="jan:Jann_0577"/>
<dbReference type="eggNOG" id="COG0480">
    <property type="taxonomic scope" value="Bacteria"/>
</dbReference>
<dbReference type="HOGENOM" id="CLU_002794_4_1_5"/>
<dbReference type="OrthoDB" id="9802948at2"/>
<dbReference type="Proteomes" id="UP000008326">
    <property type="component" value="Chromosome"/>
</dbReference>
<dbReference type="GO" id="GO:0005737">
    <property type="term" value="C:cytoplasm"/>
    <property type="evidence" value="ECO:0007669"/>
    <property type="project" value="UniProtKB-SubCell"/>
</dbReference>
<dbReference type="GO" id="GO:0005525">
    <property type="term" value="F:GTP binding"/>
    <property type="evidence" value="ECO:0007669"/>
    <property type="project" value="UniProtKB-UniRule"/>
</dbReference>
<dbReference type="GO" id="GO:0003924">
    <property type="term" value="F:GTPase activity"/>
    <property type="evidence" value="ECO:0007669"/>
    <property type="project" value="InterPro"/>
</dbReference>
<dbReference type="GO" id="GO:0003746">
    <property type="term" value="F:translation elongation factor activity"/>
    <property type="evidence" value="ECO:0007669"/>
    <property type="project" value="UniProtKB-UniRule"/>
</dbReference>
<dbReference type="GO" id="GO:0032790">
    <property type="term" value="P:ribosome disassembly"/>
    <property type="evidence" value="ECO:0007669"/>
    <property type="project" value="TreeGrafter"/>
</dbReference>
<dbReference type="CDD" id="cd01886">
    <property type="entry name" value="EF-G"/>
    <property type="match status" value="1"/>
</dbReference>
<dbReference type="CDD" id="cd16262">
    <property type="entry name" value="EFG_III"/>
    <property type="match status" value="1"/>
</dbReference>
<dbReference type="CDD" id="cd01434">
    <property type="entry name" value="EFG_mtEFG1_IV"/>
    <property type="match status" value="1"/>
</dbReference>
<dbReference type="CDD" id="cd03713">
    <property type="entry name" value="EFG_mtEFG_C"/>
    <property type="match status" value="1"/>
</dbReference>
<dbReference type="CDD" id="cd04088">
    <property type="entry name" value="EFG_mtEFG_II"/>
    <property type="match status" value="1"/>
</dbReference>
<dbReference type="FunFam" id="2.40.30.10:FF:000006">
    <property type="entry name" value="Elongation factor G"/>
    <property type="match status" value="1"/>
</dbReference>
<dbReference type="FunFam" id="3.30.230.10:FF:000003">
    <property type="entry name" value="Elongation factor G"/>
    <property type="match status" value="1"/>
</dbReference>
<dbReference type="FunFam" id="3.30.70.240:FF:000001">
    <property type="entry name" value="Elongation factor G"/>
    <property type="match status" value="1"/>
</dbReference>
<dbReference type="FunFam" id="3.30.70.870:FF:000001">
    <property type="entry name" value="Elongation factor G"/>
    <property type="match status" value="1"/>
</dbReference>
<dbReference type="FunFam" id="3.40.50.300:FF:000029">
    <property type="entry name" value="Elongation factor G"/>
    <property type="match status" value="1"/>
</dbReference>
<dbReference type="Gene3D" id="3.30.230.10">
    <property type="match status" value="1"/>
</dbReference>
<dbReference type="Gene3D" id="3.30.70.240">
    <property type="match status" value="1"/>
</dbReference>
<dbReference type="Gene3D" id="3.30.70.870">
    <property type="entry name" value="Elongation Factor G (Translational Gtpase), domain 3"/>
    <property type="match status" value="1"/>
</dbReference>
<dbReference type="Gene3D" id="3.40.50.300">
    <property type="entry name" value="P-loop containing nucleotide triphosphate hydrolases"/>
    <property type="match status" value="1"/>
</dbReference>
<dbReference type="Gene3D" id="2.40.30.10">
    <property type="entry name" value="Translation factors"/>
    <property type="match status" value="1"/>
</dbReference>
<dbReference type="HAMAP" id="MF_00054_B">
    <property type="entry name" value="EF_G_EF_2_B"/>
    <property type="match status" value="1"/>
</dbReference>
<dbReference type="InterPro" id="IPR053905">
    <property type="entry name" value="EF-G-like_DII"/>
</dbReference>
<dbReference type="InterPro" id="IPR041095">
    <property type="entry name" value="EFG_II"/>
</dbReference>
<dbReference type="InterPro" id="IPR009022">
    <property type="entry name" value="EFG_III"/>
</dbReference>
<dbReference type="InterPro" id="IPR035647">
    <property type="entry name" value="EFG_III/V"/>
</dbReference>
<dbReference type="InterPro" id="IPR047872">
    <property type="entry name" value="EFG_IV"/>
</dbReference>
<dbReference type="InterPro" id="IPR035649">
    <property type="entry name" value="EFG_V"/>
</dbReference>
<dbReference type="InterPro" id="IPR000640">
    <property type="entry name" value="EFG_V-like"/>
</dbReference>
<dbReference type="InterPro" id="IPR031157">
    <property type="entry name" value="G_TR_CS"/>
</dbReference>
<dbReference type="InterPro" id="IPR027417">
    <property type="entry name" value="P-loop_NTPase"/>
</dbReference>
<dbReference type="InterPro" id="IPR020568">
    <property type="entry name" value="Ribosomal_Su5_D2-typ_SF"/>
</dbReference>
<dbReference type="InterPro" id="IPR014721">
    <property type="entry name" value="Ribsml_uS5_D2-typ_fold_subgr"/>
</dbReference>
<dbReference type="InterPro" id="IPR005225">
    <property type="entry name" value="Small_GTP-bd"/>
</dbReference>
<dbReference type="InterPro" id="IPR000795">
    <property type="entry name" value="T_Tr_GTP-bd_dom"/>
</dbReference>
<dbReference type="InterPro" id="IPR009000">
    <property type="entry name" value="Transl_B-barrel_sf"/>
</dbReference>
<dbReference type="InterPro" id="IPR004540">
    <property type="entry name" value="Transl_elong_EFG/EF2"/>
</dbReference>
<dbReference type="InterPro" id="IPR005517">
    <property type="entry name" value="Transl_elong_EFG/EF2_IV"/>
</dbReference>
<dbReference type="NCBIfam" id="TIGR00484">
    <property type="entry name" value="EF-G"/>
    <property type="match status" value="1"/>
</dbReference>
<dbReference type="NCBIfam" id="NF009381">
    <property type="entry name" value="PRK12740.1-5"/>
    <property type="match status" value="1"/>
</dbReference>
<dbReference type="NCBIfam" id="TIGR00231">
    <property type="entry name" value="small_GTP"/>
    <property type="match status" value="1"/>
</dbReference>
<dbReference type="PANTHER" id="PTHR43261:SF1">
    <property type="entry name" value="RIBOSOME-RELEASING FACTOR 2, MITOCHONDRIAL"/>
    <property type="match status" value="1"/>
</dbReference>
<dbReference type="PANTHER" id="PTHR43261">
    <property type="entry name" value="TRANSLATION ELONGATION FACTOR G-RELATED"/>
    <property type="match status" value="1"/>
</dbReference>
<dbReference type="Pfam" id="PF22042">
    <property type="entry name" value="EF-G_D2"/>
    <property type="match status" value="1"/>
</dbReference>
<dbReference type="Pfam" id="PF00679">
    <property type="entry name" value="EFG_C"/>
    <property type="match status" value="1"/>
</dbReference>
<dbReference type="Pfam" id="PF14492">
    <property type="entry name" value="EFG_III"/>
    <property type="match status" value="1"/>
</dbReference>
<dbReference type="Pfam" id="PF03764">
    <property type="entry name" value="EFG_IV"/>
    <property type="match status" value="1"/>
</dbReference>
<dbReference type="Pfam" id="PF00009">
    <property type="entry name" value="GTP_EFTU"/>
    <property type="match status" value="1"/>
</dbReference>
<dbReference type="PRINTS" id="PR00315">
    <property type="entry name" value="ELONGATNFCT"/>
</dbReference>
<dbReference type="SMART" id="SM00838">
    <property type="entry name" value="EFG_C"/>
    <property type="match status" value="1"/>
</dbReference>
<dbReference type="SMART" id="SM00889">
    <property type="entry name" value="EFG_IV"/>
    <property type="match status" value="1"/>
</dbReference>
<dbReference type="SUPFAM" id="SSF54980">
    <property type="entry name" value="EF-G C-terminal domain-like"/>
    <property type="match status" value="2"/>
</dbReference>
<dbReference type="SUPFAM" id="SSF52540">
    <property type="entry name" value="P-loop containing nucleoside triphosphate hydrolases"/>
    <property type="match status" value="1"/>
</dbReference>
<dbReference type="SUPFAM" id="SSF54211">
    <property type="entry name" value="Ribosomal protein S5 domain 2-like"/>
    <property type="match status" value="1"/>
</dbReference>
<dbReference type="SUPFAM" id="SSF50447">
    <property type="entry name" value="Translation proteins"/>
    <property type="match status" value="1"/>
</dbReference>
<dbReference type="PROSITE" id="PS00301">
    <property type="entry name" value="G_TR_1"/>
    <property type="match status" value="1"/>
</dbReference>
<dbReference type="PROSITE" id="PS51722">
    <property type="entry name" value="G_TR_2"/>
    <property type="match status" value="1"/>
</dbReference>
<feature type="chain" id="PRO_0000263462" description="Elongation factor G">
    <location>
        <begin position="1"/>
        <end position="706"/>
    </location>
</feature>
<feature type="domain" description="tr-type G">
    <location>
        <begin position="8"/>
        <end position="295"/>
    </location>
</feature>
<feature type="binding site" evidence="1">
    <location>
        <begin position="17"/>
        <end position="24"/>
    </location>
    <ligand>
        <name>GTP</name>
        <dbReference type="ChEBI" id="CHEBI:37565"/>
    </ligand>
</feature>
<feature type="binding site" evidence="1">
    <location>
        <begin position="92"/>
        <end position="96"/>
    </location>
    <ligand>
        <name>GTP</name>
        <dbReference type="ChEBI" id="CHEBI:37565"/>
    </ligand>
</feature>
<feature type="binding site" evidence="1">
    <location>
        <begin position="146"/>
        <end position="149"/>
    </location>
    <ligand>
        <name>GTP</name>
        <dbReference type="ChEBI" id="CHEBI:37565"/>
    </ligand>
</feature>
<gene>
    <name evidence="1" type="primary">fusA</name>
    <name type="ordered locus">Jann_0577</name>
</gene>
<reference key="1">
    <citation type="submission" date="2006-02" db="EMBL/GenBank/DDBJ databases">
        <title>Complete sequence of chromosome of Jannaschia sp. CCS1.</title>
        <authorList>
            <consortium name="US DOE Joint Genome Institute"/>
            <person name="Copeland A."/>
            <person name="Lucas S."/>
            <person name="Lapidus A."/>
            <person name="Barry K."/>
            <person name="Detter J.C."/>
            <person name="Glavina del Rio T."/>
            <person name="Hammon N."/>
            <person name="Israni S."/>
            <person name="Pitluck S."/>
            <person name="Brettin T."/>
            <person name="Bruce D."/>
            <person name="Han C."/>
            <person name="Tapia R."/>
            <person name="Gilna P."/>
            <person name="Chertkov O."/>
            <person name="Saunders E."/>
            <person name="Schmutz J."/>
            <person name="Larimer F."/>
            <person name="Land M."/>
            <person name="Kyrpides N."/>
            <person name="Lykidis A."/>
            <person name="Moran M.A."/>
            <person name="Belas R."/>
            <person name="Ye W."/>
            <person name="Buchan A."/>
            <person name="Gonzalez J.M."/>
            <person name="Schell M.A."/>
            <person name="Richardson P."/>
        </authorList>
    </citation>
    <scope>NUCLEOTIDE SEQUENCE [LARGE SCALE GENOMIC DNA]</scope>
    <source>
        <strain>CCS1</strain>
    </source>
</reference>
<name>EFG_JANSC</name>
<protein>
    <recommendedName>
        <fullName evidence="1">Elongation factor G</fullName>
        <shortName evidence="1">EF-G</shortName>
    </recommendedName>
</protein>
<keyword id="KW-0963">Cytoplasm</keyword>
<keyword id="KW-0251">Elongation factor</keyword>
<keyword id="KW-0342">GTP-binding</keyword>
<keyword id="KW-0547">Nucleotide-binding</keyword>
<keyword id="KW-0648">Protein biosynthesis</keyword>
<keyword id="KW-1185">Reference proteome</keyword>
<proteinExistence type="inferred from homology"/>